<organism>
    <name type="scientific">Scorpiops jendeki</name>
    <name type="common">Scorpion</name>
    <name type="synonym">Scorpiops hardwickii jendeki</name>
    <dbReference type="NCBI Taxonomy" id="587368"/>
    <lineage>
        <taxon>Eukaryota</taxon>
        <taxon>Metazoa</taxon>
        <taxon>Ecdysozoa</taxon>
        <taxon>Arthropoda</taxon>
        <taxon>Chelicerata</taxon>
        <taxon>Arachnida</taxon>
        <taxon>Scorpiones</taxon>
        <taxon>Iurida</taxon>
        <taxon>Chactoidea</taxon>
        <taxon>Euscorpiidae</taxon>
        <taxon>Scorpiopinae</taxon>
        <taxon>Scorpiopini</taxon>
        <taxon>Scorpiops</taxon>
    </lineage>
</organism>
<keyword id="KW-1015">Disulfide bond</keyword>
<keyword id="KW-0646">Protease inhibitor</keyword>
<keyword id="KW-0964">Secreted</keyword>
<keyword id="KW-0722">Serine protease inhibitor</keyword>
<keyword id="KW-0732">Signal</keyword>
<protein>
    <recommendedName>
        <fullName evidence="5">Venom peptide SjAPI</fullName>
    </recommendedName>
    <alternativeName>
        <fullName evidence="6">Ascaris-type protease inhibitor</fullName>
    </alternativeName>
</protein>
<accession>P0DM55</accession>
<evidence type="ECO:0000250" key="1"/>
<evidence type="ECO:0000250" key="2">
    <source>
        <dbReference type="UniProtKB" id="P07851"/>
    </source>
</evidence>
<evidence type="ECO:0000255" key="3"/>
<evidence type="ECO:0000269" key="4">
    <source>
    </source>
</evidence>
<evidence type="ECO:0000303" key="5">
    <source>
    </source>
</evidence>
<evidence type="ECO:0000305" key="6"/>
<evidence type="ECO:0000305" key="7">
    <source>
    </source>
</evidence>
<feature type="signal peptide" evidence="3">
    <location>
        <begin position="1"/>
        <end position="24"/>
    </location>
</feature>
<feature type="propeptide" id="PRO_0000423041" evidence="1">
    <location>
        <begin position="25"/>
        <end position="30"/>
    </location>
</feature>
<feature type="chain" id="PRO_0000423042" description="Venom peptide SjAPI">
    <location>
        <begin position="31"/>
        <end position="94"/>
    </location>
</feature>
<feature type="domain" description="TIL" evidence="3">
    <location>
        <begin position="33"/>
        <end position="92"/>
    </location>
</feature>
<feature type="region of interest" description="Protease binding loop">
    <location>
        <begin position="63"/>
        <end position="65"/>
    </location>
</feature>
<feature type="disulfide bond" evidence="2">
    <location>
        <begin position="33"/>
        <end position="70"/>
    </location>
</feature>
<feature type="disulfide bond" evidence="2">
    <location>
        <begin position="43"/>
        <end position="66"/>
    </location>
</feature>
<feature type="disulfide bond" evidence="2">
    <location>
        <begin position="47"/>
        <end position="62"/>
    </location>
</feature>
<feature type="disulfide bond" evidence="2">
    <location>
        <begin position="51"/>
        <end position="92"/>
    </location>
</feature>
<feature type="disulfide bond" evidence="2">
    <location>
        <begin position="72"/>
        <end position="86"/>
    </location>
</feature>
<feature type="mutagenesis site" description="Inhibits both chymotrypsin and elastase, but not trypsin." evidence="4">
    <original>AAV</original>
    <variation>PLM</variation>
    <location>
        <begin position="63"/>
        <end position="65"/>
    </location>
</feature>
<feature type="mutagenesis site" description="Inhibits both chymotrypsin and elastase, but not trypsin." evidence="4">
    <original>AAV</original>
    <variation>TKD</variation>
    <location>
        <begin position="63"/>
        <end position="65"/>
    </location>
</feature>
<feature type="mutagenesis site" description="Inhibits both trypsin and chymotrypsin, but not elastase." evidence="4">
    <original>AAV</original>
    <variation>TLE</variation>
    <location>
        <begin position="63"/>
        <end position="65"/>
    </location>
</feature>
<feature type="mutagenesis site" description="Inhibits both chymotrypsin and elastase, but not trypsin." evidence="4">
    <original>AAV</original>
    <variation>TME</variation>
    <location>
        <begin position="63"/>
        <end position="65"/>
    </location>
</feature>
<feature type="mutagenesis site" description="Inhibits both chymotrypsin and elastase, but not trypsin." evidence="4">
    <original>AAV</original>
    <variation>TMQ</variation>
    <location>
        <begin position="63"/>
        <end position="65"/>
    </location>
</feature>
<feature type="mutagenesis site" description="Inhibits both trypsin and chymotrypsin, but not elastase." evidence="4">
    <original>AAV</original>
    <variation>TRE</variation>
    <location>
        <begin position="63"/>
        <end position="65"/>
    </location>
</feature>
<reference key="1">
    <citation type="journal article" date="2013" name="PLoS ONE">
        <title>SjAPI, the first functionally characterized Ascaris-type protease inhibitor from animal venoms.</title>
        <authorList>
            <person name="Chen Z."/>
            <person name="Wang B."/>
            <person name="Hu J."/>
            <person name="Yang W."/>
            <person name="Cao Z."/>
            <person name="Zhuo R."/>
            <person name="Li W."/>
            <person name="Wu Y."/>
        </authorList>
    </citation>
    <scope>NUCLEOTIDE SEQUENCE [MRNA]</scope>
    <scope>FUNCTION</scope>
    <scope>MUTAGENESIS OF 63-ALA--VAL-65</scope>
    <scope>CIRCULAR DICHROISM</scope>
    <scope>3D-STRUCTURE MODELING</scope>
    <source>
        <tissue>Venom gland</tissue>
    </source>
</reference>
<proteinExistence type="evidence at transcript level"/>
<comment type="function">
    <text evidence="4">Recombinant protein inhibits both alpha-chymotrypsin (Ki=97.1 nM) and elastase (Ki=3700 nM).</text>
</comment>
<comment type="subcellular location">
    <subcellularLocation>
        <location evidence="7">Secreted</location>
    </subcellularLocation>
</comment>
<comment type="tissue specificity">
    <text evidence="7">Expressed by the venom gland.</text>
</comment>
<comment type="miscellaneous">
    <text evidence="7">Negative results: does not inhibit trypsin.</text>
</comment>
<comment type="similarity">
    <text evidence="6">Belongs to the serine protease inhibitor-like (TIL domain-containing) family.</text>
</comment>
<name>TIL1_SCOJE</name>
<sequence length="94" mass="10312">MKWGALLCIFGFLAFCSVLDRGLGWIPDIWQKCSSKNEEFQQCGSSCPETCANHKNPEPKSCAAVCFVGCVCKPGFIRDDLKGSICVKPEDCSK</sequence>
<dbReference type="SMR" id="P0DM55"/>
<dbReference type="GO" id="GO:0005576">
    <property type="term" value="C:extracellular region"/>
    <property type="evidence" value="ECO:0007669"/>
    <property type="project" value="UniProtKB-SubCell"/>
</dbReference>
<dbReference type="GO" id="GO:0004867">
    <property type="term" value="F:serine-type endopeptidase inhibitor activity"/>
    <property type="evidence" value="ECO:0007669"/>
    <property type="project" value="UniProtKB-KW"/>
</dbReference>
<dbReference type="CDD" id="cd19941">
    <property type="entry name" value="TIL"/>
    <property type="match status" value="1"/>
</dbReference>
<dbReference type="Gene3D" id="2.10.25.10">
    <property type="entry name" value="Laminin"/>
    <property type="match status" value="1"/>
</dbReference>
<dbReference type="InterPro" id="IPR036084">
    <property type="entry name" value="Ser_inhib-like_sf"/>
</dbReference>
<dbReference type="InterPro" id="IPR051368">
    <property type="entry name" value="SerProtInhib-TIL_Domain"/>
</dbReference>
<dbReference type="InterPro" id="IPR002919">
    <property type="entry name" value="TIL_dom"/>
</dbReference>
<dbReference type="PANTHER" id="PTHR23259:SF70">
    <property type="entry name" value="ACCESSORY GLAND PROTEIN ACP62F-RELATED"/>
    <property type="match status" value="1"/>
</dbReference>
<dbReference type="PANTHER" id="PTHR23259">
    <property type="entry name" value="RIDDLE"/>
    <property type="match status" value="1"/>
</dbReference>
<dbReference type="Pfam" id="PF01826">
    <property type="entry name" value="TIL"/>
    <property type="match status" value="1"/>
</dbReference>
<dbReference type="SUPFAM" id="SSF57567">
    <property type="entry name" value="Serine protease inhibitors"/>
    <property type="match status" value="1"/>
</dbReference>